<protein>
    <recommendedName>
        <fullName evidence="1">Large-conductance mechanosensitive channel</fullName>
    </recommendedName>
</protein>
<accession>Q7NYB4</accession>
<name>MSCL_CHRVO</name>
<evidence type="ECO:0000255" key="1">
    <source>
        <dbReference type="HAMAP-Rule" id="MF_00115"/>
    </source>
</evidence>
<reference key="1">
    <citation type="journal article" date="2003" name="Proc. Natl. Acad. Sci. U.S.A.">
        <title>The complete genome sequence of Chromobacterium violaceum reveals remarkable and exploitable bacterial adaptability.</title>
        <authorList>
            <person name="Vasconcelos A.T.R."/>
            <person name="de Almeida D.F."/>
            <person name="Hungria M."/>
            <person name="Guimaraes C.T."/>
            <person name="Antonio R.V."/>
            <person name="Almeida F.C."/>
            <person name="de Almeida L.G.P."/>
            <person name="de Almeida R."/>
            <person name="Alves-Gomes J.A."/>
            <person name="Andrade E.M."/>
            <person name="Araripe J."/>
            <person name="de Araujo M.F.F."/>
            <person name="Astolfi-Filho S."/>
            <person name="Azevedo V."/>
            <person name="Baptista A.J."/>
            <person name="Bataus L.A.M."/>
            <person name="Batista J.S."/>
            <person name="Belo A."/>
            <person name="van den Berg C."/>
            <person name="Bogo M."/>
            <person name="Bonatto S."/>
            <person name="Bordignon J."/>
            <person name="Brigido M.M."/>
            <person name="Brito C.A."/>
            <person name="Brocchi M."/>
            <person name="Burity H.A."/>
            <person name="Camargo A.A."/>
            <person name="Cardoso D.D.P."/>
            <person name="Carneiro N.P."/>
            <person name="Carraro D.M."/>
            <person name="Carvalho C.M.B."/>
            <person name="Cascardo J.C.M."/>
            <person name="Cavada B.S."/>
            <person name="Chueire L.M.O."/>
            <person name="Creczynski-Pasa T.B."/>
            <person name="Cunha-Junior N.C."/>
            <person name="Fagundes N."/>
            <person name="Falcao C.L."/>
            <person name="Fantinatti F."/>
            <person name="Farias I.P."/>
            <person name="Felipe M.S.S."/>
            <person name="Ferrari L.P."/>
            <person name="Ferro J.A."/>
            <person name="Ferro M.I.T."/>
            <person name="Franco G.R."/>
            <person name="Freitas N.S.A."/>
            <person name="Furlan L.R."/>
            <person name="Gazzinelli R.T."/>
            <person name="Gomes E.A."/>
            <person name="Goncalves P.R."/>
            <person name="Grangeiro T.B."/>
            <person name="Grattapaglia D."/>
            <person name="Grisard E.C."/>
            <person name="Hanna E.S."/>
            <person name="Jardim S.N."/>
            <person name="Laurino J."/>
            <person name="Leoi L.C.T."/>
            <person name="Lima L.F.A."/>
            <person name="Loureiro M.F."/>
            <person name="Lyra M.C.C.P."/>
            <person name="Madeira H.M.F."/>
            <person name="Manfio G.P."/>
            <person name="Maranhao A.Q."/>
            <person name="Martins W.S."/>
            <person name="di Mauro S.M.Z."/>
            <person name="de Medeiros S.R.B."/>
            <person name="Meissner R.V."/>
            <person name="Moreira M.A.M."/>
            <person name="Nascimento F.F."/>
            <person name="Nicolas M.F."/>
            <person name="Oliveira J.G."/>
            <person name="Oliveira S.C."/>
            <person name="Paixao R.F.C."/>
            <person name="Parente J.A."/>
            <person name="Pedrosa F.O."/>
            <person name="Pena S.D.J."/>
            <person name="Pereira J.O."/>
            <person name="Pereira M."/>
            <person name="Pinto L.S.R.C."/>
            <person name="Pinto L.S."/>
            <person name="Porto J.I.R."/>
            <person name="Potrich D.P."/>
            <person name="Ramalho-Neto C.E."/>
            <person name="Reis A.M.M."/>
            <person name="Rigo L.U."/>
            <person name="Rondinelli E."/>
            <person name="Santos E.B.P."/>
            <person name="Santos F.R."/>
            <person name="Schneider M.P.C."/>
            <person name="Seuanez H.N."/>
            <person name="Silva A.M.R."/>
            <person name="da Silva A.L.C."/>
            <person name="Silva D.W."/>
            <person name="Silva R."/>
            <person name="Simoes I.C."/>
            <person name="Simon D."/>
            <person name="Soares C.M.A."/>
            <person name="Soares R.B.A."/>
            <person name="Souza E.M."/>
            <person name="Souza K.R.L."/>
            <person name="Souza R.C."/>
            <person name="Steffens M.B.R."/>
            <person name="Steindel M."/>
            <person name="Teixeira S.R."/>
            <person name="Urmenyi T."/>
            <person name="Vettore A."/>
            <person name="Wassem R."/>
            <person name="Zaha A."/>
            <person name="Simpson A.J.G."/>
        </authorList>
    </citation>
    <scope>NUCLEOTIDE SEQUENCE [LARGE SCALE GENOMIC DNA]</scope>
    <source>
        <strain>ATCC 12472 / DSM 30191 / JCM 1249 / CCUG 213 / NBRC 12614 / NCIMB 9131 / NCTC 9757 / MK</strain>
    </source>
</reference>
<proteinExistence type="inferred from homology"/>
<organism>
    <name type="scientific">Chromobacterium violaceum (strain ATCC 12472 / DSM 30191 / JCM 1249 / CCUG 213 / NBRC 12614 / NCIMB 9131 / NCTC 9757 / MK)</name>
    <dbReference type="NCBI Taxonomy" id="243365"/>
    <lineage>
        <taxon>Bacteria</taxon>
        <taxon>Pseudomonadati</taxon>
        <taxon>Pseudomonadota</taxon>
        <taxon>Betaproteobacteria</taxon>
        <taxon>Neisseriales</taxon>
        <taxon>Chromobacteriaceae</taxon>
        <taxon>Chromobacterium</taxon>
    </lineage>
</organism>
<dbReference type="EMBL" id="AE016825">
    <property type="protein sequence ID" value="AAQ59035.1"/>
    <property type="molecule type" value="Genomic_DNA"/>
</dbReference>
<dbReference type="RefSeq" id="WP_011134914.1">
    <property type="nucleotide sequence ID" value="NC_005085.1"/>
</dbReference>
<dbReference type="STRING" id="243365.CV_1360"/>
<dbReference type="GeneID" id="66367043"/>
<dbReference type="KEGG" id="cvi:CV_1360"/>
<dbReference type="eggNOG" id="COG1970">
    <property type="taxonomic scope" value="Bacteria"/>
</dbReference>
<dbReference type="HOGENOM" id="CLU_095787_2_3_4"/>
<dbReference type="OrthoDB" id="9810350at2"/>
<dbReference type="Proteomes" id="UP000001424">
    <property type="component" value="Chromosome"/>
</dbReference>
<dbReference type="GO" id="GO:0005886">
    <property type="term" value="C:plasma membrane"/>
    <property type="evidence" value="ECO:0007669"/>
    <property type="project" value="UniProtKB-SubCell"/>
</dbReference>
<dbReference type="GO" id="GO:0008381">
    <property type="term" value="F:mechanosensitive monoatomic ion channel activity"/>
    <property type="evidence" value="ECO:0007669"/>
    <property type="project" value="UniProtKB-UniRule"/>
</dbReference>
<dbReference type="Gene3D" id="1.10.1200.120">
    <property type="entry name" value="Large-conductance mechanosensitive channel, MscL, domain 1"/>
    <property type="match status" value="1"/>
</dbReference>
<dbReference type="HAMAP" id="MF_00115">
    <property type="entry name" value="MscL"/>
    <property type="match status" value="1"/>
</dbReference>
<dbReference type="InterPro" id="IPR019823">
    <property type="entry name" value="Mechanosensitive_channel_CS"/>
</dbReference>
<dbReference type="InterPro" id="IPR001185">
    <property type="entry name" value="MS_channel"/>
</dbReference>
<dbReference type="InterPro" id="IPR037673">
    <property type="entry name" value="MSC/AndL"/>
</dbReference>
<dbReference type="InterPro" id="IPR036019">
    <property type="entry name" value="MscL_channel"/>
</dbReference>
<dbReference type="NCBIfam" id="TIGR00220">
    <property type="entry name" value="mscL"/>
    <property type="match status" value="1"/>
</dbReference>
<dbReference type="NCBIfam" id="NF001843">
    <property type="entry name" value="PRK00567.1-4"/>
    <property type="match status" value="1"/>
</dbReference>
<dbReference type="NCBIfam" id="NF010557">
    <property type="entry name" value="PRK13952.1"/>
    <property type="match status" value="1"/>
</dbReference>
<dbReference type="PANTHER" id="PTHR30266:SF2">
    <property type="entry name" value="LARGE-CONDUCTANCE MECHANOSENSITIVE CHANNEL"/>
    <property type="match status" value="1"/>
</dbReference>
<dbReference type="PANTHER" id="PTHR30266">
    <property type="entry name" value="MECHANOSENSITIVE CHANNEL MSCL"/>
    <property type="match status" value="1"/>
</dbReference>
<dbReference type="Pfam" id="PF01741">
    <property type="entry name" value="MscL"/>
    <property type="match status" value="1"/>
</dbReference>
<dbReference type="PRINTS" id="PR01264">
    <property type="entry name" value="MECHCHANNEL"/>
</dbReference>
<dbReference type="SUPFAM" id="SSF81330">
    <property type="entry name" value="Gated mechanosensitive channel"/>
    <property type="match status" value="1"/>
</dbReference>
<dbReference type="PROSITE" id="PS01327">
    <property type="entry name" value="MSCL"/>
    <property type="match status" value="1"/>
</dbReference>
<feature type="chain" id="PRO_0000237994" description="Large-conductance mechanosensitive channel">
    <location>
        <begin position="1"/>
        <end position="153"/>
    </location>
</feature>
<feature type="transmembrane region" description="Helical" evidence="1">
    <location>
        <begin position="16"/>
        <end position="36"/>
    </location>
</feature>
<feature type="transmembrane region" description="Helical" evidence="1">
    <location>
        <begin position="88"/>
        <end position="108"/>
    </location>
</feature>
<sequence>MSVLKEFKEFAVKGNVIDLAVGVVIGGAFGSIVKSLVDDVIMPPIGLLIGNVDFSNLFFVLKDGAKQAGPYVSVAAAKQAGATTLNLGLFINALVSFTIVAFAIFMLVKAINRLKREEAAPAPAAPATKECRYCLSAIPEKATRCPCCTSQLD</sequence>
<keyword id="KW-0997">Cell inner membrane</keyword>
<keyword id="KW-1003">Cell membrane</keyword>
<keyword id="KW-0407">Ion channel</keyword>
<keyword id="KW-0406">Ion transport</keyword>
<keyword id="KW-0472">Membrane</keyword>
<keyword id="KW-1185">Reference proteome</keyword>
<keyword id="KW-0812">Transmembrane</keyword>
<keyword id="KW-1133">Transmembrane helix</keyword>
<keyword id="KW-0813">Transport</keyword>
<gene>
    <name evidence="1" type="primary">mscL</name>
    <name type="ordered locus">CV_1360</name>
</gene>
<comment type="function">
    <text evidence="1">Channel that opens in response to stretch forces in the membrane lipid bilayer. May participate in the regulation of osmotic pressure changes within the cell.</text>
</comment>
<comment type="subunit">
    <text evidence="1">Homopentamer.</text>
</comment>
<comment type="subcellular location">
    <subcellularLocation>
        <location evidence="1">Cell inner membrane</location>
        <topology evidence="1">Multi-pass membrane protein</topology>
    </subcellularLocation>
</comment>
<comment type="similarity">
    <text evidence="1">Belongs to the MscL family.</text>
</comment>